<dbReference type="EMBL" id="BC073413">
    <property type="protein sequence ID" value="AAH73413.1"/>
    <property type="molecule type" value="mRNA"/>
</dbReference>
<dbReference type="RefSeq" id="NP_001085839.1">
    <property type="nucleotide sequence ID" value="NM_001092370.1"/>
</dbReference>
<dbReference type="SMR" id="Q6GNT9"/>
<dbReference type="DNASU" id="444266"/>
<dbReference type="GeneID" id="444266"/>
<dbReference type="KEGG" id="xla:444266"/>
<dbReference type="AGR" id="Xenbase:XB-GENE-5777446"/>
<dbReference type="CTD" id="444266"/>
<dbReference type="Xenbase" id="XB-GENE-5777446">
    <property type="gene designation" value="memo1.L"/>
</dbReference>
<dbReference type="OMA" id="EQEAQYG"/>
<dbReference type="OrthoDB" id="417112at2759"/>
<dbReference type="Proteomes" id="UP000186698">
    <property type="component" value="Chromosome 5L"/>
</dbReference>
<dbReference type="Bgee" id="444266">
    <property type="expression patterns" value="Expressed in muscle tissue and 19 other cell types or tissues"/>
</dbReference>
<dbReference type="CDD" id="cd07361">
    <property type="entry name" value="MEMO_like"/>
    <property type="match status" value="1"/>
</dbReference>
<dbReference type="FunFam" id="3.40.830.10:FF:000002">
    <property type="entry name" value="MEMO1 isoform 1"/>
    <property type="match status" value="1"/>
</dbReference>
<dbReference type="Gene3D" id="3.40.830.10">
    <property type="entry name" value="LigB-like"/>
    <property type="match status" value="1"/>
</dbReference>
<dbReference type="HAMAP" id="MF_00055">
    <property type="entry name" value="MEMO1"/>
    <property type="match status" value="1"/>
</dbReference>
<dbReference type="InterPro" id="IPR002737">
    <property type="entry name" value="MEMO1_fam"/>
</dbReference>
<dbReference type="NCBIfam" id="TIGR04336">
    <property type="entry name" value="AmmeMemoSam_B"/>
    <property type="match status" value="1"/>
</dbReference>
<dbReference type="PANTHER" id="PTHR11060">
    <property type="entry name" value="PROTEIN MEMO1"/>
    <property type="match status" value="1"/>
</dbReference>
<dbReference type="PANTHER" id="PTHR11060:SF0">
    <property type="entry name" value="PROTEIN MEMO1"/>
    <property type="match status" value="1"/>
</dbReference>
<dbReference type="Pfam" id="PF01875">
    <property type="entry name" value="Memo"/>
    <property type="match status" value="1"/>
</dbReference>
<comment type="function">
    <text evidence="1">May control cell migration by relaying extracellular chemotactic signals to the microtubule cytoskeleton. Mediator of ERBB2 signaling (By similarity).</text>
</comment>
<comment type="subunit">
    <text evidence="1">Interacts with ERBB2.</text>
</comment>
<comment type="similarity">
    <text evidence="2">Belongs to the MEMO1 family.</text>
</comment>
<accession>Q6GNT9</accession>
<gene>
    <name type="primary">memo1</name>
</gene>
<proteinExistence type="evidence at transcript level"/>
<name>MEMO1_XENLA</name>
<protein>
    <recommendedName>
        <fullName>Protein MEMO1</fullName>
    </recommendedName>
    <alternativeName>
        <fullName>Mediator of ErbB2-driven cell motility 1</fullName>
        <shortName>Memo-1</shortName>
    </alternativeName>
</protein>
<sequence>MSNRSVCREASHAGSWYSASGSQLSAQLDGWLSQAQTSKRPARAIIAPHAGYTYCGSCAAHAYKQVDPSVTRRVFILGPSHHVALSRCALSTVDIYRTPLYDLHVDQKVYGELWKTGMFERMSLQTDEDEHSIEMHLPYTAKAMESHKDDLTIVPVLVGALSESKEQEFGKVFSKYLADPTNLFVISSDFCHWGQRFRYTYYDESQGEIYRSIENLDKMGMSIIEQLDPVQFSNYLKKYHNTICGRHPIGVLLNAATELQKNGVNMSFSFLNYAQSSQCRSWQDSSVSYAAGALVVH</sequence>
<evidence type="ECO:0000250" key="1"/>
<evidence type="ECO:0000305" key="2"/>
<feature type="chain" id="PRO_0000260512" description="Protein MEMO1">
    <location>
        <begin position="1"/>
        <end position="297"/>
    </location>
</feature>
<reference key="1">
    <citation type="submission" date="2004-06" db="EMBL/GenBank/DDBJ databases">
        <authorList>
            <consortium name="NIH - Xenopus Gene Collection (XGC) project"/>
        </authorList>
    </citation>
    <scope>NUCLEOTIDE SEQUENCE [LARGE SCALE MRNA]</scope>
    <source>
        <tissue>Embryo</tissue>
    </source>
</reference>
<keyword id="KW-1185">Reference proteome</keyword>
<organism>
    <name type="scientific">Xenopus laevis</name>
    <name type="common">African clawed frog</name>
    <dbReference type="NCBI Taxonomy" id="8355"/>
    <lineage>
        <taxon>Eukaryota</taxon>
        <taxon>Metazoa</taxon>
        <taxon>Chordata</taxon>
        <taxon>Craniata</taxon>
        <taxon>Vertebrata</taxon>
        <taxon>Euteleostomi</taxon>
        <taxon>Amphibia</taxon>
        <taxon>Batrachia</taxon>
        <taxon>Anura</taxon>
        <taxon>Pipoidea</taxon>
        <taxon>Pipidae</taxon>
        <taxon>Xenopodinae</taxon>
        <taxon>Xenopus</taxon>
        <taxon>Xenopus</taxon>
    </lineage>
</organism>